<feature type="chain" id="PRO_0000288726" description="ATP synthase subunit delta">
    <location>
        <begin position="1"/>
        <end position="184"/>
    </location>
</feature>
<accession>Q4UK15</accession>
<proteinExistence type="inferred from homology"/>
<dbReference type="EMBL" id="CP000053">
    <property type="protein sequence ID" value="AAY62120.1"/>
    <property type="molecule type" value="Genomic_DNA"/>
</dbReference>
<dbReference type="SMR" id="Q4UK15"/>
<dbReference type="STRING" id="315456.RF_1269"/>
<dbReference type="KEGG" id="rfe:RF_1269"/>
<dbReference type="eggNOG" id="COG0712">
    <property type="taxonomic scope" value="Bacteria"/>
</dbReference>
<dbReference type="HOGENOM" id="CLU_085114_1_1_5"/>
<dbReference type="OrthoDB" id="7160553at2"/>
<dbReference type="Proteomes" id="UP000008548">
    <property type="component" value="Chromosome"/>
</dbReference>
<dbReference type="GO" id="GO:0005886">
    <property type="term" value="C:plasma membrane"/>
    <property type="evidence" value="ECO:0007669"/>
    <property type="project" value="UniProtKB-SubCell"/>
</dbReference>
<dbReference type="GO" id="GO:0045259">
    <property type="term" value="C:proton-transporting ATP synthase complex"/>
    <property type="evidence" value="ECO:0007669"/>
    <property type="project" value="UniProtKB-KW"/>
</dbReference>
<dbReference type="GO" id="GO:0046933">
    <property type="term" value="F:proton-transporting ATP synthase activity, rotational mechanism"/>
    <property type="evidence" value="ECO:0007669"/>
    <property type="project" value="UniProtKB-UniRule"/>
</dbReference>
<dbReference type="Gene3D" id="1.10.520.20">
    <property type="entry name" value="N-terminal domain of the delta subunit of the F1F0-ATP synthase"/>
    <property type="match status" value="1"/>
</dbReference>
<dbReference type="HAMAP" id="MF_01416">
    <property type="entry name" value="ATP_synth_delta_bact"/>
    <property type="match status" value="1"/>
</dbReference>
<dbReference type="InterPro" id="IPR026015">
    <property type="entry name" value="ATP_synth_OSCP/delta_N_sf"/>
</dbReference>
<dbReference type="InterPro" id="IPR000711">
    <property type="entry name" value="ATPase_OSCP/dsu"/>
</dbReference>
<dbReference type="NCBIfam" id="TIGR01145">
    <property type="entry name" value="ATP_synt_delta"/>
    <property type="match status" value="1"/>
</dbReference>
<dbReference type="PANTHER" id="PTHR11910">
    <property type="entry name" value="ATP SYNTHASE DELTA CHAIN"/>
    <property type="match status" value="1"/>
</dbReference>
<dbReference type="Pfam" id="PF00213">
    <property type="entry name" value="OSCP"/>
    <property type="match status" value="1"/>
</dbReference>
<dbReference type="PRINTS" id="PR00125">
    <property type="entry name" value="ATPASEDELTA"/>
</dbReference>
<dbReference type="SUPFAM" id="SSF47928">
    <property type="entry name" value="N-terminal domain of the delta subunit of the F1F0-ATP synthase"/>
    <property type="match status" value="1"/>
</dbReference>
<protein>
    <recommendedName>
        <fullName evidence="1">ATP synthase subunit delta</fullName>
    </recommendedName>
    <alternativeName>
        <fullName evidence="1">ATP synthase F(1) sector subunit delta</fullName>
    </alternativeName>
    <alternativeName>
        <fullName evidence="1">F-type ATPase subunit delta</fullName>
        <shortName evidence="1">F-ATPase subunit delta</shortName>
    </alternativeName>
</protein>
<sequence>MNKDNLIENYAVALFNNAMVDNIQDKIFEEITAINRIIIDNFDIREFLFSPIVNKDDKINVVNSLVKNTKFNKIVNNFLLLLVKNSRTAILSNIVDAYNTLLYESKNIKIVQVISANKLQPKEQEWIKSRIEKELNQKTEILFDIDSTIIGGIIIKYDSMLQDYSIKGSLDKITKALKKVRIAA</sequence>
<keyword id="KW-0066">ATP synthesis</keyword>
<keyword id="KW-0997">Cell inner membrane</keyword>
<keyword id="KW-1003">Cell membrane</keyword>
<keyword id="KW-0139">CF(1)</keyword>
<keyword id="KW-0375">Hydrogen ion transport</keyword>
<keyword id="KW-0406">Ion transport</keyword>
<keyword id="KW-0472">Membrane</keyword>
<keyword id="KW-0813">Transport</keyword>
<name>ATPD_RICFE</name>
<organism>
    <name type="scientific">Rickettsia felis (strain ATCC VR-1525 / URRWXCal2)</name>
    <name type="common">Rickettsia azadi</name>
    <dbReference type="NCBI Taxonomy" id="315456"/>
    <lineage>
        <taxon>Bacteria</taxon>
        <taxon>Pseudomonadati</taxon>
        <taxon>Pseudomonadota</taxon>
        <taxon>Alphaproteobacteria</taxon>
        <taxon>Rickettsiales</taxon>
        <taxon>Rickettsiaceae</taxon>
        <taxon>Rickettsieae</taxon>
        <taxon>Rickettsia</taxon>
        <taxon>spotted fever group</taxon>
    </lineage>
</organism>
<comment type="function">
    <text evidence="1">F(1)F(0) ATP synthase produces ATP from ADP in the presence of a proton or sodium gradient. F-type ATPases consist of two structural domains, F(1) containing the extramembraneous catalytic core and F(0) containing the membrane proton channel, linked together by a central stalk and a peripheral stalk. During catalysis, ATP synthesis in the catalytic domain of F(1) is coupled via a rotary mechanism of the central stalk subunits to proton translocation.</text>
</comment>
<comment type="function">
    <text evidence="1">This protein is part of the stalk that links CF(0) to CF(1). It either transmits conformational changes from CF(0) to CF(1) or is implicated in proton conduction.</text>
</comment>
<comment type="subunit">
    <text evidence="1">F-type ATPases have 2 components, F(1) - the catalytic core - and F(0) - the membrane proton channel. F(1) has five subunits: alpha(3), beta(3), gamma(1), delta(1), epsilon(1). F(0) has three main subunits: a(1), b(2) and c(10-14). The alpha and beta chains form an alternating ring which encloses part of the gamma chain. F(1) is attached to F(0) by a central stalk formed by the gamma and epsilon chains, while a peripheral stalk is formed by the delta and b chains.</text>
</comment>
<comment type="subcellular location">
    <subcellularLocation>
        <location evidence="1">Cell inner membrane</location>
        <topology evidence="1">Peripheral membrane protein</topology>
    </subcellularLocation>
</comment>
<comment type="similarity">
    <text evidence="1">Belongs to the ATPase delta chain family.</text>
</comment>
<evidence type="ECO:0000255" key="1">
    <source>
        <dbReference type="HAMAP-Rule" id="MF_01416"/>
    </source>
</evidence>
<gene>
    <name evidence="1" type="primary">atpH</name>
    <name type="ordered locus">RF_1269</name>
</gene>
<reference key="1">
    <citation type="journal article" date="2005" name="PLoS Biol.">
        <title>The genome sequence of Rickettsia felis identifies the first putative conjugative plasmid in an obligate intracellular parasite.</title>
        <authorList>
            <person name="Ogata H."/>
            <person name="Renesto P."/>
            <person name="Audic S."/>
            <person name="Robert C."/>
            <person name="Blanc G."/>
            <person name="Fournier P.-E."/>
            <person name="Parinello H."/>
            <person name="Claverie J.-M."/>
            <person name="Raoult D."/>
        </authorList>
    </citation>
    <scope>NUCLEOTIDE SEQUENCE [LARGE SCALE GENOMIC DNA]</scope>
    <source>
        <strain>ATCC VR-1525 / URRWXCal2</strain>
    </source>
</reference>